<name>3604L_ASFM2</name>
<accession>P0C9N1</accession>
<proteinExistence type="inferred from homology"/>
<protein>
    <recommendedName>
        <fullName>Protein MGF 360-4L</fullName>
    </recommendedName>
</protein>
<dbReference type="EMBL" id="AY261361">
    <property type="status" value="NOT_ANNOTATED_CDS"/>
    <property type="molecule type" value="Genomic_DNA"/>
</dbReference>
<dbReference type="SMR" id="P0C9N1"/>
<dbReference type="Proteomes" id="UP000000860">
    <property type="component" value="Segment"/>
</dbReference>
<dbReference type="GO" id="GO:0042330">
    <property type="term" value="P:taxis"/>
    <property type="evidence" value="ECO:0007669"/>
    <property type="project" value="InterPro"/>
</dbReference>
<dbReference type="InterPro" id="IPR002595">
    <property type="entry name" value="ASFV_MGF360"/>
</dbReference>
<dbReference type="Pfam" id="PF01671">
    <property type="entry name" value="ASFV_360"/>
    <property type="match status" value="1"/>
</dbReference>
<organismHost>
    <name type="scientific">Ornithodoros</name>
    <name type="common">relapsing fever ticks</name>
    <dbReference type="NCBI Taxonomy" id="6937"/>
</organismHost>
<organismHost>
    <name type="scientific">Phacochoerus aethiopicus</name>
    <name type="common">Warthog</name>
    <dbReference type="NCBI Taxonomy" id="85517"/>
</organismHost>
<organismHost>
    <name type="scientific">Phacochoerus africanus</name>
    <name type="common">Warthog</name>
    <dbReference type="NCBI Taxonomy" id="41426"/>
</organismHost>
<organismHost>
    <name type="scientific">Potamochoerus larvatus</name>
    <name type="common">Bushpig</name>
    <dbReference type="NCBI Taxonomy" id="273792"/>
</organismHost>
<organismHost>
    <name type="scientific">Sus scrofa</name>
    <name type="common">Pig</name>
    <dbReference type="NCBI Taxonomy" id="9823"/>
</organismHost>
<sequence>MNSLQVLTKKVLIETKAFSNYHEDDIFILQQLGLWWENGPIGFCKQCKMVTSGSMSCSDVDSYELDRALVKAVKENQTDLIKLFVLWGADINFGIICAKTKQTKDLCIQLGADPEFLDVGLYNMFVYLVKRKKVLLAIEIYYDNISILDSFDSHDFHVLIDFVYNRFILYLDEKEKEMTRNTLVLRFWYKFAIDFKLTKPIRYLSKKFPHLDLWRLQTAIYLGNIDEVHHAYFQENIRLRLNVMMFLACARPGNKLGIYYCFALGADLDHALERLISFNSINREINRKISGKTRLCIEGSYLSNIYFCIGLGANPYTKKIQETIKQKNSNIMILLYSKKKILSPHSVLQNKILDPSDVYKMISTYKNTESFYPFSSLAVKLIQQAK</sequence>
<comment type="function">
    <text evidence="1">Plays a role in virus cell tropism, and may be required for efficient virus replication in macrophages.</text>
</comment>
<comment type="similarity">
    <text evidence="2">Belongs to the asfivirus MGF 360 family.</text>
</comment>
<organism>
    <name type="scientific">African swine fever virus (isolate Tick/Malawi/Lil 20-1/1983)</name>
    <name type="common">ASFV</name>
    <dbReference type="NCBI Taxonomy" id="10500"/>
    <lineage>
        <taxon>Viruses</taxon>
        <taxon>Varidnaviria</taxon>
        <taxon>Bamfordvirae</taxon>
        <taxon>Nucleocytoviricota</taxon>
        <taxon>Pokkesviricetes</taxon>
        <taxon>Asfuvirales</taxon>
        <taxon>Asfarviridae</taxon>
        <taxon>Asfivirus</taxon>
        <taxon>African swine fever virus</taxon>
    </lineage>
</organism>
<feature type="chain" id="PRO_0000373257" description="Protein MGF 360-4L">
    <location>
        <begin position="1"/>
        <end position="386"/>
    </location>
</feature>
<reference key="1">
    <citation type="submission" date="2003-03" db="EMBL/GenBank/DDBJ databases">
        <title>African swine fever virus genomes.</title>
        <authorList>
            <person name="Kutish G.F."/>
            <person name="Rock D.L."/>
        </authorList>
    </citation>
    <scope>NUCLEOTIDE SEQUENCE [LARGE SCALE GENOMIC DNA]</scope>
</reference>
<evidence type="ECO:0000250" key="1"/>
<evidence type="ECO:0000305" key="2"/>
<gene>
    <name type="ordered locus">Mal-020</name>
</gene>